<protein>
    <recommendedName>
        <fullName evidence="1">Amino-acid acetyltransferase</fullName>
        <ecNumber evidence="1">2.3.1.1</ecNumber>
    </recommendedName>
    <alternativeName>
        <fullName evidence="1">N-acetylglutamate synthase</fullName>
        <shortName evidence="1">AGS</shortName>
        <shortName evidence="1">NAGS</shortName>
    </alternativeName>
</protein>
<organism>
    <name type="scientific">Photobacterium profundum (strain SS9)</name>
    <dbReference type="NCBI Taxonomy" id="298386"/>
    <lineage>
        <taxon>Bacteria</taxon>
        <taxon>Pseudomonadati</taxon>
        <taxon>Pseudomonadota</taxon>
        <taxon>Gammaproteobacteria</taxon>
        <taxon>Vibrionales</taxon>
        <taxon>Vibrionaceae</taxon>
        <taxon>Photobacterium</taxon>
    </lineage>
</organism>
<proteinExistence type="inferred from homology"/>
<name>ARGA_PHOPR</name>
<gene>
    <name evidence="1" type="primary">argA</name>
    <name type="ordered locus">PBPRA2996</name>
</gene>
<evidence type="ECO:0000255" key="1">
    <source>
        <dbReference type="HAMAP-Rule" id="MF_01105"/>
    </source>
</evidence>
<feature type="chain" id="PRO_1000084814" description="Amino-acid acetyltransferase">
    <location>
        <begin position="1"/>
        <end position="441"/>
    </location>
</feature>
<feature type="domain" description="N-acetyltransferase" evidence="1">
    <location>
        <begin position="295"/>
        <end position="434"/>
    </location>
</feature>
<reference key="1">
    <citation type="journal article" date="2005" name="Science">
        <title>Life at depth: Photobacterium profundum genome sequence and expression analysis.</title>
        <authorList>
            <person name="Vezzi A."/>
            <person name="Campanaro S."/>
            <person name="D'Angelo M."/>
            <person name="Simonato F."/>
            <person name="Vitulo N."/>
            <person name="Lauro F.M."/>
            <person name="Cestaro A."/>
            <person name="Malacrida G."/>
            <person name="Simionati B."/>
            <person name="Cannata N."/>
            <person name="Romualdi C."/>
            <person name="Bartlett D.H."/>
            <person name="Valle G."/>
        </authorList>
    </citation>
    <scope>NUCLEOTIDE SEQUENCE [LARGE SCALE GENOMIC DNA]</scope>
    <source>
        <strain>ATCC BAA-1253 / SS9</strain>
    </source>
</reference>
<comment type="catalytic activity">
    <reaction evidence="1">
        <text>L-glutamate + acetyl-CoA = N-acetyl-L-glutamate + CoA + H(+)</text>
        <dbReference type="Rhea" id="RHEA:24292"/>
        <dbReference type="ChEBI" id="CHEBI:15378"/>
        <dbReference type="ChEBI" id="CHEBI:29985"/>
        <dbReference type="ChEBI" id="CHEBI:44337"/>
        <dbReference type="ChEBI" id="CHEBI:57287"/>
        <dbReference type="ChEBI" id="CHEBI:57288"/>
        <dbReference type="EC" id="2.3.1.1"/>
    </reaction>
</comment>
<comment type="pathway">
    <text evidence="1">Amino-acid biosynthesis; L-arginine biosynthesis; N(2)-acetyl-L-ornithine from L-glutamate: step 1/4.</text>
</comment>
<comment type="subcellular location">
    <subcellularLocation>
        <location evidence="1">Cytoplasm</location>
    </subcellularLocation>
</comment>
<comment type="similarity">
    <text evidence="1">Belongs to the acetyltransferase family. ArgA subfamily.</text>
</comment>
<accession>Q6LMZ6</accession>
<sequence length="441" mass="48442">MKLRSTALVKGFRQSAPYVNAHSGKTVVIMLGGEAIADPNFANIVNDIALLNSLGLQIVVVYGARPQISHLLTSQGYTTPYHKGIRVTDARALELVKQAAGQLQLDITARFSMGLNNTPMAGAQINVISGNFIIAQPLGIDDGIDYYHTGRIRRIDIDGIQRQLNQHSIVLLGPVASSVTGECFNLTSEEVATQLAIRLKADKLIGFCSEQGVIDLDGEVASEMLPNEAETALQRLIEAQEDDCGTARFLRGAVSACRAGVPRSHLISYKEDGALIQELFSLDGIGTQIVMASAEKVRGAGIDDIGGILDLIYPLEQEGILVRRSREQLEQEIEQFTIIERDGLIIACAALYPFPDEKIAEMACVAVHPDFRDGDRGVILLNRLRQQAKEQRLKHVFVLTTRSVHWFLEQGFIESDVEQLPMAKKALYNFQRRSKILVLAV</sequence>
<dbReference type="EC" id="2.3.1.1" evidence="1"/>
<dbReference type="EMBL" id="CR378672">
    <property type="protein sequence ID" value="CAG21330.1"/>
    <property type="molecule type" value="Genomic_DNA"/>
</dbReference>
<dbReference type="RefSeq" id="WP_011219596.1">
    <property type="nucleotide sequence ID" value="NC_006370.1"/>
</dbReference>
<dbReference type="SMR" id="Q6LMZ6"/>
<dbReference type="STRING" id="298386.PBPRA2996"/>
<dbReference type="KEGG" id="ppr:PBPRA2996"/>
<dbReference type="eggNOG" id="COG0548">
    <property type="taxonomic scope" value="Bacteria"/>
</dbReference>
<dbReference type="eggNOG" id="COG1246">
    <property type="taxonomic scope" value="Bacteria"/>
</dbReference>
<dbReference type="HOGENOM" id="CLU_024773_0_0_6"/>
<dbReference type="UniPathway" id="UPA00068">
    <property type="reaction ID" value="UER00106"/>
</dbReference>
<dbReference type="Proteomes" id="UP000000593">
    <property type="component" value="Chromosome 1"/>
</dbReference>
<dbReference type="GO" id="GO:0005737">
    <property type="term" value="C:cytoplasm"/>
    <property type="evidence" value="ECO:0007669"/>
    <property type="project" value="UniProtKB-SubCell"/>
</dbReference>
<dbReference type="GO" id="GO:0004042">
    <property type="term" value="F:L-glutamate N-acetyltransferase activity"/>
    <property type="evidence" value="ECO:0007669"/>
    <property type="project" value="UniProtKB-UniRule"/>
</dbReference>
<dbReference type="GO" id="GO:0006526">
    <property type="term" value="P:L-arginine biosynthetic process"/>
    <property type="evidence" value="ECO:0007669"/>
    <property type="project" value="UniProtKB-UniRule"/>
</dbReference>
<dbReference type="CDD" id="cd04237">
    <property type="entry name" value="AAK_NAGS-ABP"/>
    <property type="match status" value="1"/>
</dbReference>
<dbReference type="CDD" id="cd04301">
    <property type="entry name" value="NAT_SF"/>
    <property type="match status" value="1"/>
</dbReference>
<dbReference type="FunFam" id="3.40.1160.10:FF:000005">
    <property type="entry name" value="Amino-acid acetyltransferase"/>
    <property type="match status" value="1"/>
</dbReference>
<dbReference type="Gene3D" id="3.40.630.30">
    <property type="match status" value="1"/>
</dbReference>
<dbReference type="Gene3D" id="3.40.1160.10">
    <property type="entry name" value="Acetylglutamate kinase-like"/>
    <property type="match status" value="1"/>
</dbReference>
<dbReference type="HAMAP" id="MF_01105">
    <property type="entry name" value="N_acetyl_glu_synth"/>
    <property type="match status" value="1"/>
</dbReference>
<dbReference type="InterPro" id="IPR036393">
    <property type="entry name" value="AceGlu_kinase-like_sf"/>
</dbReference>
<dbReference type="InterPro" id="IPR016181">
    <property type="entry name" value="Acyl_CoA_acyltransferase"/>
</dbReference>
<dbReference type="InterPro" id="IPR001048">
    <property type="entry name" value="Asp/Glu/Uridylate_kinase"/>
</dbReference>
<dbReference type="InterPro" id="IPR000182">
    <property type="entry name" value="GNAT_dom"/>
</dbReference>
<dbReference type="InterPro" id="IPR033719">
    <property type="entry name" value="NAGS_kin"/>
</dbReference>
<dbReference type="InterPro" id="IPR010167">
    <property type="entry name" value="NH2A_AcTrfase"/>
</dbReference>
<dbReference type="NCBIfam" id="TIGR01890">
    <property type="entry name" value="N-Ac-Glu-synth"/>
    <property type="match status" value="1"/>
</dbReference>
<dbReference type="NCBIfam" id="NF003641">
    <property type="entry name" value="PRK05279.1"/>
    <property type="match status" value="1"/>
</dbReference>
<dbReference type="PANTHER" id="PTHR30602">
    <property type="entry name" value="AMINO-ACID ACETYLTRANSFERASE"/>
    <property type="match status" value="1"/>
</dbReference>
<dbReference type="PANTHER" id="PTHR30602:SF12">
    <property type="entry name" value="AMINO-ACID ACETYLTRANSFERASE NAGS1, CHLOROPLASTIC-RELATED"/>
    <property type="match status" value="1"/>
</dbReference>
<dbReference type="Pfam" id="PF00696">
    <property type="entry name" value="AA_kinase"/>
    <property type="match status" value="1"/>
</dbReference>
<dbReference type="Pfam" id="PF00583">
    <property type="entry name" value="Acetyltransf_1"/>
    <property type="match status" value="1"/>
</dbReference>
<dbReference type="PIRSF" id="PIRSF000423">
    <property type="entry name" value="ArgA"/>
    <property type="match status" value="1"/>
</dbReference>
<dbReference type="SUPFAM" id="SSF55729">
    <property type="entry name" value="Acyl-CoA N-acyltransferases (Nat)"/>
    <property type="match status" value="1"/>
</dbReference>
<dbReference type="SUPFAM" id="SSF53633">
    <property type="entry name" value="Carbamate kinase-like"/>
    <property type="match status" value="1"/>
</dbReference>
<dbReference type="PROSITE" id="PS51186">
    <property type="entry name" value="GNAT"/>
    <property type="match status" value="1"/>
</dbReference>
<keyword id="KW-0012">Acyltransferase</keyword>
<keyword id="KW-0028">Amino-acid biosynthesis</keyword>
<keyword id="KW-0055">Arginine biosynthesis</keyword>
<keyword id="KW-0963">Cytoplasm</keyword>
<keyword id="KW-1185">Reference proteome</keyword>
<keyword id="KW-0808">Transferase</keyword>